<evidence type="ECO:0000255" key="1">
    <source>
        <dbReference type="HAMAP-Rule" id="MF_01959"/>
    </source>
</evidence>
<feature type="chain" id="PRO_0000238796" description="Cytochrome c-type biogenesis protein CcmE">
    <location>
        <begin position="1"/>
        <end position="153"/>
    </location>
</feature>
<feature type="topological domain" description="Cytoplasmic" evidence="1">
    <location>
        <begin position="1"/>
        <end position="8"/>
    </location>
</feature>
<feature type="transmembrane region" description="Helical; Signal-anchor for type II membrane protein" evidence="1">
    <location>
        <begin position="9"/>
        <end position="29"/>
    </location>
</feature>
<feature type="topological domain" description="Periplasmic" evidence="1">
    <location>
        <begin position="30"/>
        <end position="153"/>
    </location>
</feature>
<feature type="binding site" description="covalent" evidence="1">
    <location>
        <position position="124"/>
    </location>
    <ligand>
        <name>heme</name>
        <dbReference type="ChEBI" id="CHEBI:30413"/>
    </ligand>
</feature>
<feature type="binding site" description="axial binding residue" evidence="1">
    <location>
        <position position="128"/>
    </location>
    <ligand>
        <name>heme</name>
        <dbReference type="ChEBI" id="CHEBI:30413"/>
    </ligand>
    <ligandPart>
        <name>Fe</name>
        <dbReference type="ChEBI" id="CHEBI:18248"/>
    </ligandPart>
</feature>
<comment type="function">
    <text evidence="1">Heme chaperone required for the biogenesis of c-type cytochromes. Transiently binds heme delivered by CcmC and transfers the heme to apo-cytochromes in a process facilitated by CcmF and CcmH.</text>
</comment>
<comment type="subcellular location">
    <subcellularLocation>
        <location evidence="1">Cell inner membrane</location>
        <topology evidence="1">Single-pass type II membrane protein</topology>
        <orientation evidence="1">Periplasmic side</orientation>
    </subcellularLocation>
</comment>
<comment type="similarity">
    <text evidence="1">Belongs to the CcmE/CycJ family.</text>
</comment>
<proteinExistence type="inferred from homology"/>
<protein>
    <recommendedName>
        <fullName evidence="1">Cytochrome c-type biogenesis protein CcmE</fullName>
    </recommendedName>
    <alternativeName>
        <fullName evidence="1">Cytochrome c maturation protein E</fullName>
    </alternativeName>
    <alternativeName>
        <fullName evidence="1">Heme chaperone CcmE</fullName>
    </alternativeName>
</protein>
<organism>
    <name type="scientific">Bordetella bronchiseptica (strain ATCC BAA-588 / NCTC 13252 / RB50)</name>
    <name type="common">Alcaligenes bronchisepticus</name>
    <dbReference type="NCBI Taxonomy" id="257310"/>
    <lineage>
        <taxon>Bacteria</taxon>
        <taxon>Pseudomonadati</taxon>
        <taxon>Pseudomonadota</taxon>
        <taxon>Betaproteobacteria</taxon>
        <taxon>Burkholderiales</taxon>
        <taxon>Alcaligenaceae</taxon>
        <taxon>Bordetella</taxon>
    </lineage>
</organism>
<accession>Q7WIP4</accession>
<reference key="1">
    <citation type="journal article" date="2003" name="Nat. Genet.">
        <title>Comparative analysis of the genome sequences of Bordetella pertussis, Bordetella parapertussis and Bordetella bronchiseptica.</title>
        <authorList>
            <person name="Parkhill J."/>
            <person name="Sebaihia M."/>
            <person name="Preston A."/>
            <person name="Murphy L.D."/>
            <person name="Thomson N.R."/>
            <person name="Harris D.E."/>
            <person name="Holden M.T.G."/>
            <person name="Churcher C.M."/>
            <person name="Bentley S.D."/>
            <person name="Mungall K.L."/>
            <person name="Cerdeno-Tarraga A.-M."/>
            <person name="Temple L."/>
            <person name="James K.D."/>
            <person name="Harris B."/>
            <person name="Quail M.A."/>
            <person name="Achtman M."/>
            <person name="Atkin R."/>
            <person name="Baker S."/>
            <person name="Basham D."/>
            <person name="Bason N."/>
            <person name="Cherevach I."/>
            <person name="Chillingworth T."/>
            <person name="Collins M."/>
            <person name="Cronin A."/>
            <person name="Davis P."/>
            <person name="Doggett J."/>
            <person name="Feltwell T."/>
            <person name="Goble A."/>
            <person name="Hamlin N."/>
            <person name="Hauser H."/>
            <person name="Holroyd S."/>
            <person name="Jagels K."/>
            <person name="Leather S."/>
            <person name="Moule S."/>
            <person name="Norberczak H."/>
            <person name="O'Neil S."/>
            <person name="Ormond D."/>
            <person name="Price C."/>
            <person name="Rabbinowitsch E."/>
            <person name="Rutter S."/>
            <person name="Sanders M."/>
            <person name="Saunders D."/>
            <person name="Seeger K."/>
            <person name="Sharp S."/>
            <person name="Simmonds M."/>
            <person name="Skelton J."/>
            <person name="Squares R."/>
            <person name="Squares S."/>
            <person name="Stevens K."/>
            <person name="Unwin L."/>
            <person name="Whitehead S."/>
            <person name="Barrell B.G."/>
            <person name="Maskell D.J."/>
        </authorList>
    </citation>
    <scope>NUCLEOTIDE SEQUENCE [LARGE SCALE GENOMIC DNA]</scope>
    <source>
        <strain>ATCC BAA-588 / NCTC 13252 / RB50</strain>
    </source>
</reference>
<name>CCME_BORBR</name>
<gene>
    <name evidence="1" type="primary">ccmE</name>
    <name evidence="1" type="synonym">cycJ</name>
    <name type="ordered locus">BB2807</name>
</gene>
<dbReference type="EMBL" id="BX640445">
    <property type="protein sequence ID" value="CAE33299.1"/>
    <property type="molecule type" value="Genomic_DNA"/>
</dbReference>
<dbReference type="RefSeq" id="WP_003811414.1">
    <property type="nucleotide sequence ID" value="NC_002927.3"/>
</dbReference>
<dbReference type="SMR" id="Q7WIP4"/>
<dbReference type="GeneID" id="56478917"/>
<dbReference type="KEGG" id="bbr:BB2807"/>
<dbReference type="eggNOG" id="COG2332">
    <property type="taxonomic scope" value="Bacteria"/>
</dbReference>
<dbReference type="HOGENOM" id="CLU_079503_1_1_4"/>
<dbReference type="Proteomes" id="UP000001027">
    <property type="component" value="Chromosome"/>
</dbReference>
<dbReference type="GO" id="GO:0005886">
    <property type="term" value="C:plasma membrane"/>
    <property type="evidence" value="ECO:0007669"/>
    <property type="project" value="UniProtKB-SubCell"/>
</dbReference>
<dbReference type="GO" id="GO:0020037">
    <property type="term" value="F:heme binding"/>
    <property type="evidence" value="ECO:0007669"/>
    <property type="project" value="InterPro"/>
</dbReference>
<dbReference type="GO" id="GO:0046872">
    <property type="term" value="F:metal ion binding"/>
    <property type="evidence" value="ECO:0007669"/>
    <property type="project" value="UniProtKB-KW"/>
</dbReference>
<dbReference type="GO" id="GO:0017004">
    <property type="term" value="P:cytochrome complex assembly"/>
    <property type="evidence" value="ECO:0007669"/>
    <property type="project" value="UniProtKB-KW"/>
</dbReference>
<dbReference type="Gene3D" id="2.40.50.140">
    <property type="entry name" value="Nucleic acid-binding proteins"/>
    <property type="match status" value="1"/>
</dbReference>
<dbReference type="HAMAP" id="MF_01959">
    <property type="entry name" value="CcmE"/>
    <property type="match status" value="1"/>
</dbReference>
<dbReference type="InterPro" id="IPR004329">
    <property type="entry name" value="CcmE"/>
</dbReference>
<dbReference type="InterPro" id="IPR036127">
    <property type="entry name" value="CcmE-like_sf"/>
</dbReference>
<dbReference type="InterPro" id="IPR012340">
    <property type="entry name" value="NA-bd_OB-fold"/>
</dbReference>
<dbReference type="NCBIfam" id="NF009727">
    <property type="entry name" value="PRK13254.1-1"/>
    <property type="match status" value="1"/>
</dbReference>
<dbReference type="NCBIfam" id="NF009729">
    <property type="entry name" value="PRK13254.1-3"/>
    <property type="match status" value="1"/>
</dbReference>
<dbReference type="NCBIfam" id="NF009731">
    <property type="entry name" value="PRK13254.1-5"/>
    <property type="match status" value="1"/>
</dbReference>
<dbReference type="PANTHER" id="PTHR34128">
    <property type="entry name" value="CYTOCHROME C-TYPE BIOGENESIS PROTEIN CCME HOMOLOG, MITOCHONDRIAL"/>
    <property type="match status" value="1"/>
</dbReference>
<dbReference type="PANTHER" id="PTHR34128:SF2">
    <property type="entry name" value="CYTOCHROME C-TYPE BIOGENESIS PROTEIN CCME HOMOLOG, MITOCHONDRIAL"/>
    <property type="match status" value="1"/>
</dbReference>
<dbReference type="Pfam" id="PF03100">
    <property type="entry name" value="CcmE"/>
    <property type="match status" value="1"/>
</dbReference>
<dbReference type="SUPFAM" id="SSF82093">
    <property type="entry name" value="Heme chaperone CcmE"/>
    <property type="match status" value="1"/>
</dbReference>
<sequence length="153" mass="15979">MATRRGRRALLIAGGVGLLALAAALVLNALRSNLVFFFSPTQVHAHEAPSSGSFRVGGLVRAGSVERAADGLTLRFVVTDTVREVPVAYTGLLPALFREGKGVVVAGNMGADGVFRATEVLAKHDENYMPPQAADALRQAGALPSATLQTEAR</sequence>
<keyword id="KW-0997">Cell inner membrane</keyword>
<keyword id="KW-1003">Cell membrane</keyword>
<keyword id="KW-0201">Cytochrome c-type biogenesis</keyword>
<keyword id="KW-0349">Heme</keyword>
<keyword id="KW-0408">Iron</keyword>
<keyword id="KW-0472">Membrane</keyword>
<keyword id="KW-0479">Metal-binding</keyword>
<keyword id="KW-0735">Signal-anchor</keyword>
<keyword id="KW-0812">Transmembrane</keyword>
<keyword id="KW-1133">Transmembrane helix</keyword>